<protein>
    <recommendedName>
        <fullName evidence="1">Shikimate dehydrogenase (NADP(+))</fullName>
        <shortName evidence="1">SDH</shortName>
        <ecNumber evidence="1">1.1.1.25</ecNumber>
    </recommendedName>
</protein>
<reference key="1">
    <citation type="journal article" date="2008" name="PLoS ONE">
        <title>Comparative analysis of Acinetobacters: three genomes for three lifestyles.</title>
        <authorList>
            <person name="Vallenet D."/>
            <person name="Nordmann P."/>
            <person name="Barbe V."/>
            <person name="Poirel L."/>
            <person name="Mangenot S."/>
            <person name="Bataille E."/>
            <person name="Dossat C."/>
            <person name="Gas S."/>
            <person name="Kreimeyer A."/>
            <person name="Lenoble P."/>
            <person name="Oztas S."/>
            <person name="Poulain J."/>
            <person name="Segurens B."/>
            <person name="Robert C."/>
            <person name="Abergel C."/>
            <person name="Claverie J.-M."/>
            <person name="Raoult D."/>
            <person name="Medigue C."/>
            <person name="Weissenbach J."/>
            <person name="Cruveiller S."/>
        </authorList>
    </citation>
    <scope>NUCLEOTIDE SEQUENCE [LARGE SCALE GENOMIC DNA]</scope>
    <source>
        <strain>AYE</strain>
    </source>
</reference>
<comment type="function">
    <text evidence="1">Involved in the biosynthesis of the chorismate, which leads to the biosynthesis of aromatic amino acids. Catalyzes the reversible NADPH linked reduction of 3-dehydroshikimate (DHSA) to yield shikimate (SA).</text>
</comment>
<comment type="catalytic activity">
    <reaction evidence="1">
        <text>shikimate + NADP(+) = 3-dehydroshikimate + NADPH + H(+)</text>
        <dbReference type="Rhea" id="RHEA:17737"/>
        <dbReference type="ChEBI" id="CHEBI:15378"/>
        <dbReference type="ChEBI" id="CHEBI:16630"/>
        <dbReference type="ChEBI" id="CHEBI:36208"/>
        <dbReference type="ChEBI" id="CHEBI:57783"/>
        <dbReference type="ChEBI" id="CHEBI:58349"/>
        <dbReference type="EC" id="1.1.1.25"/>
    </reaction>
</comment>
<comment type="pathway">
    <text evidence="1">Metabolic intermediate biosynthesis; chorismate biosynthesis; chorismate from D-erythrose 4-phosphate and phosphoenolpyruvate: step 4/7.</text>
</comment>
<comment type="subunit">
    <text evidence="1">Homodimer.</text>
</comment>
<comment type="similarity">
    <text evidence="1">Belongs to the shikimate dehydrogenase family.</text>
</comment>
<gene>
    <name evidence="1" type="primary">aroE</name>
    <name type="ordered locus">ABAYE0377</name>
</gene>
<accession>B0V707</accession>
<dbReference type="EC" id="1.1.1.25" evidence="1"/>
<dbReference type="EMBL" id="CU459141">
    <property type="protein sequence ID" value="CAM85353.1"/>
    <property type="molecule type" value="Genomic_DNA"/>
</dbReference>
<dbReference type="RefSeq" id="WP_000166013.1">
    <property type="nucleotide sequence ID" value="NZ_JBDGFB010000011.1"/>
</dbReference>
<dbReference type="SMR" id="B0V707"/>
<dbReference type="EnsemblBacteria" id="CAM85353">
    <property type="protein sequence ID" value="CAM85353"/>
    <property type="gene ID" value="ABAYE0377"/>
</dbReference>
<dbReference type="KEGG" id="aby:ABAYE0377"/>
<dbReference type="HOGENOM" id="CLU_044063_2_1_6"/>
<dbReference type="UniPathway" id="UPA00053">
    <property type="reaction ID" value="UER00087"/>
</dbReference>
<dbReference type="GO" id="GO:0005829">
    <property type="term" value="C:cytosol"/>
    <property type="evidence" value="ECO:0007669"/>
    <property type="project" value="TreeGrafter"/>
</dbReference>
<dbReference type="GO" id="GO:0050661">
    <property type="term" value="F:NADP binding"/>
    <property type="evidence" value="ECO:0007669"/>
    <property type="project" value="InterPro"/>
</dbReference>
<dbReference type="GO" id="GO:0004764">
    <property type="term" value="F:shikimate 3-dehydrogenase (NADP+) activity"/>
    <property type="evidence" value="ECO:0007669"/>
    <property type="project" value="UniProtKB-UniRule"/>
</dbReference>
<dbReference type="GO" id="GO:0008652">
    <property type="term" value="P:amino acid biosynthetic process"/>
    <property type="evidence" value="ECO:0007669"/>
    <property type="project" value="UniProtKB-KW"/>
</dbReference>
<dbReference type="GO" id="GO:0009073">
    <property type="term" value="P:aromatic amino acid family biosynthetic process"/>
    <property type="evidence" value="ECO:0007669"/>
    <property type="project" value="UniProtKB-KW"/>
</dbReference>
<dbReference type="GO" id="GO:0009423">
    <property type="term" value="P:chorismate biosynthetic process"/>
    <property type="evidence" value="ECO:0007669"/>
    <property type="project" value="UniProtKB-UniRule"/>
</dbReference>
<dbReference type="GO" id="GO:0019632">
    <property type="term" value="P:shikimate metabolic process"/>
    <property type="evidence" value="ECO:0007669"/>
    <property type="project" value="InterPro"/>
</dbReference>
<dbReference type="CDD" id="cd01065">
    <property type="entry name" value="NAD_bind_Shikimate_DH"/>
    <property type="match status" value="1"/>
</dbReference>
<dbReference type="FunFam" id="3.40.50.10860:FF:000006">
    <property type="entry name" value="Shikimate dehydrogenase (NADP(+))"/>
    <property type="match status" value="1"/>
</dbReference>
<dbReference type="Gene3D" id="3.40.50.10860">
    <property type="entry name" value="Leucine Dehydrogenase, chain A, domain 1"/>
    <property type="match status" value="1"/>
</dbReference>
<dbReference type="Gene3D" id="3.40.50.720">
    <property type="entry name" value="NAD(P)-binding Rossmann-like Domain"/>
    <property type="match status" value="1"/>
</dbReference>
<dbReference type="HAMAP" id="MF_00222">
    <property type="entry name" value="Shikimate_DH_AroE"/>
    <property type="match status" value="1"/>
</dbReference>
<dbReference type="InterPro" id="IPR046346">
    <property type="entry name" value="Aminoacid_DH-like_N_sf"/>
</dbReference>
<dbReference type="InterPro" id="IPR036291">
    <property type="entry name" value="NAD(P)-bd_dom_sf"/>
</dbReference>
<dbReference type="InterPro" id="IPR041121">
    <property type="entry name" value="SDH_C"/>
</dbReference>
<dbReference type="InterPro" id="IPR011342">
    <property type="entry name" value="Shikimate_DH"/>
</dbReference>
<dbReference type="InterPro" id="IPR013708">
    <property type="entry name" value="Shikimate_DH-bd_N"/>
</dbReference>
<dbReference type="InterPro" id="IPR022893">
    <property type="entry name" value="Shikimate_DH_fam"/>
</dbReference>
<dbReference type="InterPro" id="IPR006151">
    <property type="entry name" value="Shikm_DH/Glu-tRNA_Rdtase"/>
</dbReference>
<dbReference type="NCBIfam" id="TIGR00507">
    <property type="entry name" value="aroE"/>
    <property type="match status" value="1"/>
</dbReference>
<dbReference type="NCBIfam" id="NF001310">
    <property type="entry name" value="PRK00258.1-2"/>
    <property type="match status" value="1"/>
</dbReference>
<dbReference type="PANTHER" id="PTHR21089:SF1">
    <property type="entry name" value="BIFUNCTIONAL 3-DEHYDROQUINATE DEHYDRATASE_SHIKIMATE DEHYDROGENASE, CHLOROPLASTIC"/>
    <property type="match status" value="1"/>
</dbReference>
<dbReference type="PANTHER" id="PTHR21089">
    <property type="entry name" value="SHIKIMATE DEHYDROGENASE"/>
    <property type="match status" value="1"/>
</dbReference>
<dbReference type="Pfam" id="PF18317">
    <property type="entry name" value="SDH_C"/>
    <property type="match status" value="1"/>
</dbReference>
<dbReference type="Pfam" id="PF01488">
    <property type="entry name" value="Shikimate_DH"/>
    <property type="match status" value="1"/>
</dbReference>
<dbReference type="Pfam" id="PF08501">
    <property type="entry name" value="Shikimate_dh_N"/>
    <property type="match status" value="1"/>
</dbReference>
<dbReference type="SUPFAM" id="SSF53223">
    <property type="entry name" value="Aminoacid dehydrogenase-like, N-terminal domain"/>
    <property type="match status" value="1"/>
</dbReference>
<dbReference type="SUPFAM" id="SSF51735">
    <property type="entry name" value="NAD(P)-binding Rossmann-fold domains"/>
    <property type="match status" value="1"/>
</dbReference>
<organism>
    <name type="scientific">Acinetobacter baumannii (strain AYE)</name>
    <dbReference type="NCBI Taxonomy" id="509173"/>
    <lineage>
        <taxon>Bacteria</taxon>
        <taxon>Pseudomonadati</taxon>
        <taxon>Pseudomonadota</taxon>
        <taxon>Gammaproteobacteria</taxon>
        <taxon>Moraxellales</taxon>
        <taxon>Moraxellaceae</taxon>
        <taxon>Acinetobacter</taxon>
        <taxon>Acinetobacter calcoaceticus/baumannii complex</taxon>
    </lineage>
</organism>
<keyword id="KW-0028">Amino-acid biosynthesis</keyword>
<keyword id="KW-0057">Aromatic amino acid biosynthesis</keyword>
<keyword id="KW-0521">NADP</keyword>
<keyword id="KW-0560">Oxidoreductase</keyword>
<name>AROE_ACIBY</name>
<evidence type="ECO:0000255" key="1">
    <source>
        <dbReference type="HAMAP-Rule" id="MF_00222"/>
    </source>
</evidence>
<feature type="chain" id="PRO_1000100098" description="Shikimate dehydrogenase (NADP(+))">
    <location>
        <begin position="1"/>
        <end position="262"/>
    </location>
</feature>
<feature type="active site" description="Proton acceptor" evidence="1">
    <location>
        <position position="66"/>
    </location>
</feature>
<feature type="binding site" evidence="1">
    <location>
        <begin position="15"/>
        <end position="17"/>
    </location>
    <ligand>
        <name>shikimate</name>
        <dbReference type="ChEBI" id="CHEBI:36208"/>
    </ligand>
</feature>
<feature type="binding site" evidence="1">
    <location>
        <position position="62"/>
    </location>
    <ligand>
        <name>shikimate</name>
        <dbReference type="ChEBI" id="CHEBI:36208"/>
    </ligand>
</feature>
<feature type="binding site" evidence="1">
    <location>
        <position position="78"/>
    </location>
    <ligand>
        <name>NADP(+)</name>
        <dbReference type="ChEBI" id="CHEBI:58349"/>
    </ligand>
</feature>
<feature type="binding site" evidence="1">
    <location>
        <position position="87"/>
    </location>
    <ligand>
        <name>shikimate</name>
        <dbReference type="ChEBI" id="CHEBI:36208"/>
    </ligand>
</feature>
<feature type="binding site" evidence="1">
    <location>
        <position position="102"/>
    </location>
    <ligand>
        <name>shikimate</name>
        <dbReference type="ChEBI" id="CHEBI:36208"/>
    </ligand>
</feature>
<feature type="binding site" evidence="1">
    <location>
        <begin position="126"/>
        <end position="130"/>
    </location>
    <ligand>
        <name>NADP(+)</name>
        <dbReference type="ChEBI" id="CHEBI:58349"/>
    </ligand>
</feature>
<feature type="binding site" evidence="1">
    <location>
        <begin position="150"/>
        <end position="155"/>
    </location>
    <ligand>
        <name>NADP(+)</name>
        <dbReference type="ChEBI" id="CHEBI:58349"/>
    </ligand>
</feature>
<feature type="binding site" evidence="1">
    <location>
        <position position="214"/>
    </location>
    <ligand>
        <name>NADP(+)</name>
        <dbReference type="ChEBI" id="CHEBI:58349"/>
    </ligand>
</feature>
<feature type="binding site" evidence="1">
    <location>
        <position position="216"/>
    </location>
    <ligand>
        <name>shikimate</name>
        <dbReference type="ChEBI" id="CHEBI:36208"/>
    </ligand>
</feature>
<feature type="binding site" evidence="1">
    <location>
        <position position="236"/>
    </location>
    <ligand>
        <name>NADP(+)</name>
        <dbReference type="ChEBI" id="CHEBI:58349"/>
    </ligand>
</feature>
<sequence length="262" mass="28614">MTKQFAVIGNPIEQSRSPELHHAFAEKTGVDLNYQKRLAPLDGFESSMRSFFAEGGSGMNVTVPFKEQAFALCDVLTERAQIAKAVNTLWMENGKLHGDNTDGQGLVAAIQALEWNLENTTILILGAGGATRGVIYPLVQAGAQKIVIANRTLARAEQLVDDLKTAVPQAQLQAISLNDLEGDFDIVINATSTSLSGDALQLPEKLQFKYAYEMAYGKPSSFIDQAKQRNVPYAEGFGMLVGQAIEAFYIWNGVRPQLKDFL</sequence>
<proteinExistence type="inferred from homology"/>